<sequence length="381" mass="45288">MKENELKNEKSVDVLSFKQLESQKIVLPQDLFRSSFTWFCYEIYKSLAFRIWMLLWLPLSVWWKLSNNCIYPLIVSLLVLFLGPIFVLVICGLSRKRSLSKQLIQFCKEVTENTPSSDPHDWEVVAANLNSYLYENKAWNTKYFFFNAMVCQEAFRTTLLEPFSLKKDEAAKVKSFKDSVPYIEEALGVYFREVEKQWKLFNSEKSWSPVGLEDAKLPKEAYRFKLTWFLKRISNIFMLIPFLNFLCCIYVSRGMCLLLRTFYLGWILFMLVQGFQNMRMIVLSVKMEHKMQFLSTIINEQESGANGWDEIAKKMNRYLFEKKVWKNEEFFFDGIDCEWFFSHFFYRVLSAKKSMRALSLNVELWPYIKEAQLSCSEESLA</sequence>
<gene>
    <name type="primary">COS1</name>
    <name type="ordered locus">YNL336W</name>
    <name type="ORF">N0275</name>
</gene>
<name>COS1_YEAST</name>
<accession>P53822</accession>
<accession>D6W0L1</accession>
<evidence type="ECO:0000255" key="1"/>
<evidence type="ECO:0000269" key="2">
    <source>
    </source>
</evidence>
<evidence type="ECO:0000305" key="3"/>
<protein>
    <recommendedName>
        <fullName>Protein COS1</fullName>
    </recommendedName>
</protein>
<reference key="1">
    <citation type="journal article" date="1997" name="Nature">
        <title>The nucleotide sequence of Saccharomyces cerevisiae chromosome XIV and its evolutionary implications.</title>
        <authorList>
            <person name="Philippsen P."/>
            <person name="Kleine K."/>
            <person name="Poehlmann R."/>
            <person name="Duesterhoeft A."/>
            <person name="Hamberg K."/>
            <person name="Hegemann J.H."/>
            <person name="Obermaier B."/>
            <person name="Urrestarazu L.A."/>
            <person name="Aert R."/>
            <person name="Albermann K."/>
            <person name="Altmann R."/>
            <person name="Andre B."/>
            <person name="Baladron V."/>
            <person name="Ballesta J.P.G."/>
            <person name="Becam A.-M."/>
            <person name="Beinhauer J.D."/>
            <person name="Boskovic J."/>
            <person name="Buitrago M.J."/>
            <person name="Bussereau F."/>
            <person name="Coster F."/>
            <person name="Crouzet M."/>
            <person name="D'Angelo M."/>
            <person name="Dal Pero F."/>
            <person name="De Antoni A."/>
            <person name="del Rey F."/>
            <person name="Doignon F."/>
            <person name="Domdey H."/>
            <person name="Dubois E."/>
            <person name="Fiedler T.A."/>
            <person name="Fleig U."/>
            <person name="Floeth M."/>
            <person name="Fritz C."/>
            <person name="Gaillardin C."/>
            <person name="Garcia-Cantalejo J.M."/>
            <person name="Glansdorff N."/>
            <person name="Goffeau A."/>
            <person name="Gueldener U."/>
            <person name="Herbert C.J."/>
            <person name="Heumann K."/>
            <person name="Heuss-Neitzel D."/>
            <person name="Hilbert H."/>
            <person name="Hinni K."/>
            <person name="Iraqui Houssaini I."/>
            <person name="Jacquet M."/>
            <person name="Jimenez A."/>
            <person name="Jonniaux J.-L."/>
            <person name="Karpfinger-Hartl L."/>
            <person name="Lanfranchi G."/>
            <person name="Lepingle A."/>
            <person name="Levesque H."/>
            <person name="Lyck R."/>
            <person name="Maftahi M."/>
            <person name="Mallet L."/>
            <person name="Maurer C.T.C."/>
            <person name="Messenguy F."/>
            <person name="Mewes H.-W."/>
            <person name="Moestl D."/>
            <person name="Nasr F."/>
            <person name="Nicaud J.-M."/>
            <person name="Niedenthal R.K."/>
            <person name="Pandolfo D."/>
            <person name="Pierard A."/>
            <person name="Piravandi E."/>
            <person name="Planta R.J."/>
            <person name="Pohl T.M."/>
            <person name="Purnelle B."/>
            <person name="Rebischung C."/>
            <person name="Remacha M.A."/>
            <person name="Revuelta J.L."/>
            <person name="Rinke M."/>
            <person name="Saiz J.E."/>
            <person name="Sartorello F."/>
            <person name="Scherens B."/>
            <person name="Sen-Gupta M."/>
            <person name="Soler-Mira A."/>
            <person name="Urbanus J.H.M."/>
            <person name="Valle G."/>
            <person name="Van Dyck L."/>
            <person name="Verhasselt P."/>
            <person name="Vierendeels F."/>
            <person name="Vissers S."/>
            <person name="Voet M."/>
            <person name="Volckaert G."/>
            <person name="Wach A."/>
            <person name="Wambutt R."/>
            <person name="Wedler H."/>
            <person name="Zollner A."/>
            <person name="Hani J."/>
        </authorList>
    </citation>
    <scope>NUCLEOTIDE SEQUENCE [LARGE SCALE GENOMIC DNA]</scope>
    <source>
        <strain>ATCC 204508 / S288c</strain>
    </source>
</reference>
<reference key="2">
    <citation type="journal article" date="2014" name="G3 (Bethesda)">
        <title>The reference genome sequence of Saccharomyces cerevisiae: Then and now.</title>
        <authorList>
            <person name="Engel S.R."/>
            <person name="Dietrich F.S."/>
            <person name="Fisk D.G."/>
            <person name="Binkley G."/>
            <person name="Balakrishnan R."/>
            <person name="Costanzo M.C."/>
            <person name="Dwight S.S."/>
            <person name="Hitz B.C."/>
            <person name="Karra K."/>
            <person name="Nash R.S."/>
            <person name="Weng S."/>
            <person name="Wong E.D."/>
            <person name="Lloyd P."/>
            <person name="Skrzypek M.S."/>
            <person name="Miyasato S.R."/>
            <person name="Simison M."/>
            <person name="Cherry J.M."/>
        </authorList>
    </citation>
    <scope>GENOME REANNOTATION</scope>
    <source>
        <strain>ATCC 204508 / S288c</strain>
    </source>
</reference>
<reference key="3">
    <citation type="journal article" date="2003" name="Nature">
        <title>Global analysis of protein expression in yeast.</title>
        <authorList>
            <person name="Ghaemmaghami S."/>
            <person name="Huh W.-K."/>
            <person name="Bower K."/>
            <person name="Howson R.W."/>
            <person name="Belle A."/>
            <person name="Dephoure N."/>
            <person name="O'Shea E.K."/>
            <person name="Weissman J.S."/>
        </authorList>
    </citation>
    <scope>LEVEL OF PROTEIN EXPRESSION [LARGE SCALE ANALYSIS]</scope>
</reference>
<reference key="4">
    <citation type="journal article" date="2006" name="Proc. Natl. Acad. Sci. U.S.A.">
        <title>A global topology map of the Saccharomyces cerevisiae membrane proteome.</title>
        <authorList>
            <person name="Kim H."/>
            <person name="Melen K."/>
            <person name="Oesterberg M."/>
            <person name="von Heijne G."/>
        </authorList>
    </citation>
    <scope>TOPOLOGY [LARGE SCALE ANALYSIS]</scope>
    <source>
        <strain>ATCC 208353 / W303-1A</strain>
    </source>
</reference>
<feature type="chain" id="PRO_0000207513" description="Protein COS1">
    <location>
        <begin position="1"/>
        <end position="381"/>
    </location>
</feature>
<feature type="topological domain" description="Cytoplasmic" evidence="1">
    <location>
        <begin position="1"/>
        <end position="42"/>
    </location>
</feature>
<feature type="transmembrane region" description="Helical" evidence="1">
    <location>
        <begin position="43"/>
        <end position="63"/>
    </location>
</feature>
<feature type="topological domain" description="Extracellular" evidence="1">
    <location>
        <begin position="64"/>
        <end position="72"/>
    </location>
</feature>
<feature type="transmembrane region" description="Helical" evidence="1">
    <location>
        <begin position="73"/>
        <end position="93"/>
    </location>
</feature>
<feature type="topological domain" description="Cytoplasmic" evidence="1">
    <location>
        <begin position="94"/>
        <end position="231"/>
    </location>
</feature>
<feature type="transmembrane region" description="Helical" evidence="1">
    <location>
        <begin position="232"/>
        <end position="252"/>
    </location>
</feature>
<feature type="topological domain" description="Extracellular" evidence="1">
    <location>
        <begin position="253"/>
        <end position="254"/>
    </location>
</feature>
<feature type="transmembrane region" description="Helical" evidence="1">
    <location>
        <begin position="255"/>
        <end position="275"/>
    </location>
</feature>
<feature type="topological domain" description="Cytoplasmic" evidence="1">
    <location>
        <begin position="276"/>
        <end position="381"/>
    </location>
</feature>
<comment type="subcellular location">
    <subcellularLocation>
        <location>Membrane</location>
        <topology>Multi-pass membrane protein</topology>
    </subcellularLocation>
</comment>
<comment type="miscellaneous">
    <text evidence="2">Present with 1730 molecules/cell in log phase SD medium.</text>
</comment>
<comment type="similarity">
    <text evidence="3">Belongs to the DUP/COS family.</text>
</comment>
<keyword id="KW-0472">Membrane</keyword>
<keyword id="KW-1185">Reference proteome</keyword>
<keyword id="KW-0812">Transmembrane</keyword>
<keyword id="KW-1133">Transmembrane helix</keyword>
<dbReference type="EMBL" id="Z71612">
    <property type="protein sequence ID" value="CAA96270.1"/>
    <property type="molecule type" value="Genomic_DNA"/>
</dbReference>
<dbReference type="EMBL" id="BK006947">
    <property type="protein sequence ID" value="DAA10227.1"/>
    <property type="molecule type" value="Genomic_DNA"/>
</dbReference>
<dbReference type="PIR" id="S63322">
    <property type="entry name" value="S63322"/>
</dbReference>
<dbReference type="RefSeq" id="NP_014063.1">
    <property type="nucleotide sequence ID" value="NM_001183174.1"/>
</dbReference>
<dbReference type="BioGRID" id="35505">
    <property type="interactions" value="84"/>
</dbReference>
<dbReference type="DIP" id="DIP-7523N"/>
<dbReference type="FunCoup" id="P53822">
    <property type="interactions" value="66"/>
</dbReference>
<dbReference type="IntAct" id="P53822">
    <property type="interactions" value="5"/>
</dbReference>
<dbReference type="MINT" id="P53822"/>
<dbReference type="STRING" id="4932.YNL336W"/>
<dbReference type="iPTMnet" id="P53822"/>
<dbReference type="PaxDb" id="4932-YNL336W"/>
<dbReference type="PeptideAtlas" id="P53822"/>
<dbReference type="EnsemblFungi" id="YNL336W_mRNA">
    <property type="protein sequence ID" value="YNL336W"/>
    <property type="gene ID" value="YNL336W"/>
</dbReference>
<dbReference type="GeneID" id="855380"/>
<dbReference type="KEGG" id="sce:YNL336W"/>
<dbReference type="AGR" id="SGD:S000005280"/>
<dbReference type="SGD" id="S000005280">
    <property type="gene designation" value="COS1"/>
</dbReference>
<dbReference type="VEuPathDB" id="FungiDB:YNL336W"/>
<dbReference type="eggNOG" id="ENOG502SAGH">
    <property type="taxonomic scope" value="Eukaryota"/>
</dbReference>
<dbReference type="GeneTree" id="ENSGT00940000176283"/>
<dbReference type="HOGENOM" id="CLU_062892_1_0_1"/>
<dbReference type="InParanoid" id="P53822"/>
<dbReference type="OMA" id="KRISNIX"/>
<dbReference type="OrthoDB" id="4039705at2759"/>
<dbReference type="BioCyc" id="YEAST:G3O-33319-MONOMER"/>
<dbReference type="BioGRID-ORCS" id="855380">
    <property type="hits" value="0 hits in 10 CRISPR screens"/>
</dbReference>
<dbReference type="PRO" id="PR:P53822"/>
<dbReference type="Proteomes" id="UP000002311">
    <property type="component" value="Chromosome XIV"/>
</dbReference>
<dbReference type="RNAct" id="P53822">
    <property type="molecule type" value="protein"/>
</dbReference>
<dbReference type="GO" id="GO:0005768">
    <property type="term" value="C:endosome"/>
    <property type="evidence" value="ECO:0000314"/>
    <property type="project" value="SGD"/>
</dbReference>
<dbReference type="GO" id="GO:0000324">
    <property type="term" value="C:fungal-type vacuole"/>
    <property type="evidence" value="ECO:0007005"/>
    <property type="project" value="SGD"/>
</dbReference>
<dbReference type="GO" id="GO:0000329">
    <property type="term" value="C:fungal-type vacuole membrane"/>
    <property type="evidence" value="ECO:0007005"/>
    <property type="project" value="SGD"/>
</dbReference>
<dbReference type="GO" id="GO:0043328">
    <property type="term" value="P:protein transport to vacuole involved in ubiquitin-dependent protein catabolic process via the multivesicular body sorting pathway"/>
    <property type="evidence" value="ECO:0000250"/>
    <property type="project" value="SGD"/>
</dbReference>
<dbReference type="InterPro" id="IPR001142">
    <property type="entry name" value="DUP/COS"/>
</dbReference>
<dbReference type="Pfam" id="PF00674">
    <property type="entry name" value="DUP"/>
    <property type="match status" value="2"/>
</dbReference>
<proteinExistence type="evidence at protein level"/>
<organism>
    <name type="scientific">Saccharomyces cerevisiae (strain ATCC 204508 / S288c)</name>
    <name type="common">Baker's yeast</name>
    <dbReference type="NCBI Taxonomy" id="559292"/>
    <lineage>
        <taxon>Eukaryota</taxon>
        <taxon>Fungi</taxon>
        <taxon>Dikarya</taxon>
        <taxon>Ascomycota</taxon>
        <taxon>Saccharomycotina</taxon>
        <taxon>Saccharomycetes</taxon>
        <taxon>Saccharomycetales</taxon>
        <taxon>Saccharomycetaceae</taxon>
        <taxon>Saccharomyces</taxon>
    </lineage>
</organism>